<accession>Q7W2D4</accession>
<feature type="chain" id="PRO_0000095747" description="Translation initiation factor IF-1 1">
    <location>
        <begin position="1"/>
        <end position="72"/>
    </location>
</feature>
<feature type="domain" description="S1-like" evidence="1">
    <location>
        <begin position="1"/>
        <end position="72"/>
    </location>
</feature>
<reference key="1">
    <citation type="journal article" date="2003" name="Nat. Genet.">
        <title>Comparative analysis of the genome sequences of Bordetella pertussis, Bordetella parapertussis and Bordetella bronchiseptica.</title>
        <authorList>
            <person name="Parkhill J."/>
            <person name="Sebaihia M."/>
            <person name="Preston A."/>
            <person name="Murphy L.D."/>
            <person name="Thomson N.R."/>
            <person name="Harris D.E."/>
            <person name="Holden M.T.G."/>
            <person name="Churcher C.M."/>
            <person name="Bentley S.D."/>
            <person name="Mungall K.L."/>
            <person name="Cerdeno-Tarraga A.-M."/>
            <person name="Temple L."/>
            <person name="James K.D."/>
            <person name="Harris B."/>
            <person name="Quail M.A."/>
            <person name="Achtman M."/>
            <person name="Atkin R."/>
            <person name="Baker S."/>
            <person name="Basham D."/>
            <person name="Bason N."/>
            <person name="Cherevach I."/>
            <person name="Chillingworth T."/>
            <person name="Collins M."/>
            <person name="Cronin A."/>
            <person name="Davis P."/>
            <person name="Doggett J."/>
            <person name="Feltwell T."/>
            <person name="Goble A."/>
            <person name="Hamlin N."/>
            <person name="Hauser H."/>
            <person name="Holroyd S."/>
            <person name="Jagels K."/>
            <person name="Leather S."/>
            <person name="Moule S."/>
            <person name="Norberczak H."/>
            <person name="O'Neil S."/>
            <person name="Ormond D."/>
            <person name="Price C."/>
            <person name="Rabbinowitsch E."/>
            <person name="Rutter S."/>
            <person name="Sanders M."/>
            <person name="Saunders D."/>
            <person name="Seeger K."/>
            <person name="Sharp S."/>
            <person name="Simmonds M."/>
            <person name="Skelton J."/>
            <person name="Squares R."/>
            <person name="Squares S."/>
            <person name="Stevens K."/>
            <person name="Unwin L."/>
            <person name="Whitehead S."/>
            <person name="Barrell B.G."/>
            <person name="Maskell D.J."/>
        </authorList>
    </citation>
    <scope>NUCLEOTIDE SEQUENCE [LARGE SCALE GENOMIC DNA]</scope>
    <source>
        <strain>12822 / ATCC BAA-587 / NCTC 13253</strain>
    </source>
</reference>
<sequence>MSKDDVIQMQGEVLENLPNATFRVKLENGHVVLGHISGKMRMHYIRILPGDKVTVELTPYDLTRARIVFRSK</sequence>
<protein>
    <recommendedName>
        <fullName evidence="1">Translation initiation factor IF-1 1</fullName>
    </recommendedName>
</protein>
<organism>
    <name type="scientific">Bordetella parapertussis (strain 12822 / ATCC BAA-587 / NCTC 13253)</name>
    <dbReference type="NCBI Taxonomy" id="257311"/>
    <lineage>
        <taxon>Bacteria</taxon>
        <taxon>Pseudomonadati</taxon>
        <taxon>Pseudomonadota</taxon>
        <taxon>Betaproteobacteria</taxon>
        <taxon>Burkholderiales</taxon>
        <taxon>Alcaligenaceae</taxon>
        <taxon>Bordetella</taxon>
    </lineage>
</organism>
<comment type="function">
    <text evidence="1">One of the essential components for the initiation of protein synthesis. Stabilizes the binding of IF-2 and IF-3 on the 30S subunit to which N-formylmethionyl-tRNA(fMet) subsequently binds. Helps modulate mRNA selection, yielding the 30S pre-initiation complex (PIC). Upon addition of the 50S ribosomal subunit IF-1, IF-2 and IF-3 are released leaving the mature 70S translation initiation complex.</text>
</comment>
<comment type="subunit">
    <text evidence="1">Component of the 30S ribosomal translation pre-initiation complex which assembles on the 30S ribosome in the order IF-2 and IF-3, IF-1 and N-formylmethionyl-tRNA(fMet); mRNA recruitment can occur at any time during PIC assembly.</text>
</comment>
<comment type="subcellular location">
    <subcellularLocation>
        <location evidence="1">Cytoplasm</location>
    </subcellularLocation>
</comment>
<comment type="similarity">
    <text evidence="1">Belongs to the IF-1 family.</text>
</comment>
<evidence type="ECO:0000255" key="1">
    <source>
        <dbReference type="HAMAP-Rule" id="MF_00075"/>
    </source>
</evidence>
<keyword id="KW-0963">Cytoplasm</keyword>
<keyword id="KW-0396">Initiation factor</keyword>
<keyword id="KW-0648">Protein biosynthesis</keyword>
<keyword id="KW-0694">RNA-binding</keyword>
<keyword id="KW-0699">rRNA-binding</keyword>
<dbReference type="EMBL" id="BX640423">
    <property type="protein sequence ID" value="CAE39793.1"/>
    <property type="molecule type" value="Genomic_DNA"/>
</dbReference>
<dbReference type="RefSeq" id="WP_003806927.1">
    <property type="nucleotide sequence ID" value="NC_002928.3"/>
</dbReference>
<dbReference type="SMR" id="Q7W2D4"/>
<dbReference type="GeneID" id="92787647"/>
<dbReference type="KEGG" id="bpa:BPP0052"/>
<dbReference type="HOGENOM" id="CLU_151267_1_0_4"/>
<dbReference type="Proteomes" id="UP000001421">
    <property type="component" value="Chromosome"/>
</dbReference>
<dbReference type="GO" id="GO:0005829">
    <property type="term" value="C:cytosol"/>
    <property type="evidence" value="ECO:0007669"/>
    <property type="project" value="TreeGrafter"/>
</dbReference>
<dbReference type="GO" id="GO:0043022">
    <property type="term" value="F:ribosome binding"/>
    <property type="evidence" value="ECO:0007669"/>
    <property type="project" value="UniProtKB-UniRule"/>
</dbReference>
<dbReference type="GO" id="GO:0019843">
    <property type="term" value="F:rRNA binding"/>
    <property type="evidence" value="ECO:0007669"/>
    <property type="project" value="UniProtKB-UniRule"/>
</dbReference>
<dbReference type="GO" id="GO:0003743">
    <property type="term" value="F:translation initiation factor activity"/>
    <property type="evidence" value="ECO:0007669"/>
    <property type="project" value="UniProtKB-UniRule"/>
</dbReference>
<dbReference type="CDD" id="cd04451">
    <property type="entry name" value="S1_IF1"/>
    <property type="match status" value="1"/>
</dbReference>
<dbReference type="FunFam" id="2.40.50.140:FF:000002">
    <property type="entry name" value="Translation initiation factor IF-1"/>
    <property type="match status" value="1"/>
</dbReference>
<dbReference type="Gene3D" id="2.40.50.140">
    <property type="entry name" value="Nucleic acid-binding proteins"/>
    <property type="match status" value="1"/>
</dbReference>
<dbReference type="HAMAP" id="MF_00075">
    <property type="entry name" value="IF_1"/>
    <property type="match status" value="1"/>
</dbReference>
<dbReference type="InterPro" id="IPR012340">
    <property type="entry name" value="NA-bd_OB-fold"/>
</dbReference>
<dbReference type="InterPro" id="IPR006196">
    <property type="entry name" value="RNA-binding_domain_S1_IF1"/>
</dbReference>
<dbReference type="InterPro" id="IPR004368">
    <property type="entry name" value="TIF_IF1"/>
</dbReference>
<dbReference type="NCBIfam" id="TIGR00008">
    <property type="entry name" value="infA"/>
    <property type="match status" value="1"/>
</dbReference>
<dbReference type="PANTHER" id="PTHR33370">
    <property type="entry name" value="TRANSLATION INITIATION FACTOR IF-1, CHLOROPLASTIC"/>
    <property type="match status" value="1"/>
</dbReference>
<dbReference type="PANTHER" id="PTHR33370:SF1">
    <property type="entry name" value="TRANSLATION INITIATION FACTOR IF-1, CHLOROPLASTIC"/>
    <property type="match status" value="1"/>
</dbReference>
<dbReference type="Pfam" id="PF01176">
    <property type="entry name" value="eIF-1a"/>
    <property type="match status" value="1"/>
</dbReference>
<dbReference type="SUPFAM" id="SSF50249">
    <property type="entry name" value="Nucleic acid-binding proteins"/>
    <property type="match status" value="1"/>
</dbReference>
<dbReference type="PROSITE" id="PS50832">
    <property type="entry name" value="S1_IF1_TYPE"/>
    <property type="match status" value="1"/>
</dbReference>
<name>IF11_BORPA</name>
<proteinExistence type="inferred from homology"/>
<gene>
    <name evidence="1" type="primary">infA1</name>
    <name type="ordered locus">BPP0052</name>
</gene>